<keyword id="KW-0240">DNA-directed RNA polymerase</keyword>
<keyword id="KW-0460">Magnesium</keyword>
<keyword id="KW-0479">Metal-binding</keyword>
<keyword id="KW-0548">Nucleotidyltransferase</keyword>
<keyword id="KW-1185">Reference proteome</keyword>
<keyword id="KW-0804">Transcription</keyword>
<keyword id="KW-0808">Transferase</keyword>
<keyword id="KW-0862">Zinc</keyword>
<sequence length="1407" mass="155420">MKDLLKFLKAQTKTEEFDAIKIALASPDMIRSWSFGEVKKPETINYRTFKPERDGLFCARIFGPVKDYECLCGKYKRLKHRGVICEKCGVEVTQTKVRRERMGHIELASPTAHIWFLKSLPSRIGLLLDMPLRDIERVLYFESYVVVEGGMTNLERRQILTEEQYLDALEEFGDEFDAKMGAEAIQALLKNMDLEQECEQLREELTETNSETKRKKLTKRIKLLEAFVQSGNKPEWMILTVLPVLPPDLRPLVPLDGGRFATSDLNDLYRRVINRNNRLKRLLDLAAPDIIVRNEKRMLQEAVDALLDNGRRGRAITGSNKRPLKSLADMIKGKQGRFRQNLLGKRVDYSGRSVITVGPYLRLHQCGLPKKMALELFKPFIYGKLELRGLATTIKAAKKMVEREEAVVWDILDEVIREHPVLLNRAPTLHRLGIQAFEPVLIEGKAIQLHPLVCAAYNADFDGDQMAVHVPLTLEAQLEARALMMSTNNILSPANGEPIIVPSQDVVLGLYYMTRDCVNAKGEGMVLTGPKEAERVYRAGLASLHARVKVRITEEIKSIEGDVTHQTSIIDTTIGRAILWMIVPKGLPFSIVNQPLGKKAISKMLNTCYRILGLKPTVIFADQTMYTGFAYAARSGASVGIDDMVIPAKKAEIIEEAETEVAEIQEQFQSGLVTAGERYNKVIDIWAAANERVAKAMMENLSVEDVVNRDGVVEQQVSFNSIFMMADSGARGSAAQIRQLAGMRGLMAKPDGSIIETPITANFREGLNVLQYFISTHGARKGLADTALKTANSGYLTRRLVDVAQDLVVTEDDCGTHEGIMMTPVIEGGDVKEPLRERVLGRVTAEDVIKPGTADILVPRNTLLNEQWCDMLEENSVDVVKVRSVVSCQTDFGVCANCYGRDLARGHIINKGEAIGVIAAQSIGEPGTQLTMRTFHIGGAASRAAAESSIQVKNKGSLKLNNVKFVMNGNGKLVITSRNTELKLIDEFGRTKESYKVPYGAVMAKGDGSDVSGGETVANWDPHTMPVVTEVSGFIRFADMIDGQTITRQTDDLTGLSSIVVLDSAERTGSGKDLRPALKIVDAKGQDVLIPGTDMPAQYFLPGKTIVQLEDGVQIGAGDTLARLPQESSGTKDITGGLPRVADLFEARRPKEPAILAEISGIISFGKETKGKRRLVISPLDGSDAYEEMIPKWRQLNVFEGEVVERGDVVSDGPESPHDILRLRGVHAVTRYITNEVQEVYRLQGVKINDKHIEVIVRQMLRKGTIVSAGSTEFLEGEQAEMSRIKIANRKLEADGKITATFSRDLLGITKASLATESFISAASFQETTRVLTEAAVAGKRDELRGLKENVIVGRLIPAGTGYAYHQDRMRRRQASEAPVVPQVSADEASANMAELLNAGFGKRDDE</sequence>
<reference key="1">
    <citation type="journal article" date="2004" name="Proc. Natl. Acad. Sci. U.S.A.">
        <title>Genome sequence of the enterobacterial phytopathogen Erwinia carotovora subsp. atroseptica and characterization of virulence factors.</title>
        <authorList>
            <person name="Bell K.S."/>
            <person name="Sebaihia M."/>
            <person name="Pritchard L."/>
            <person name="Holden M.T.G."/>
            <person name="Hyman L.J."/>
            <person name="Holeva M.C."/>
            <person name="Thomson N.R."/>
            <person name="Bentley S.D."/>
            <person name="Churcher L.J.C."/>
            <person name="Mungall K."/>
            <person name="Atkin R."/>
            <person name="Bason N."/>
            <person name="Brooks K."/>
            <person name="Chillingworth T."/>
            <person name="Clark K."/>
            <person name="Doggett J."/>
            <person name="Fraser A."/>
            <person name="Hance Z."/>
            <person name="Hauser H."/>
            <person name="Jagels K."/>
            <person name="Moule S."/>
            <person name="Norbertczak H."/>
            <person name="Ormond D."/>
            <person name="Price C."/>
            <person name="Quail M.A."/>
            <person name="Sanders M."/>
            <person name="Walker D."/>
            <person name="Whitehead S."/>
            <person name="Salmond G.P.C."/>
            <person name="Birch P.R.J."/>
            <person name="Parkhill J."/>
            <person name="Toth I.K."/>
        </authorList>
    </citation>
    <scope>NUCLEOTIDE SEQUENCE [LARGE SCALE GENOMIC DNA]</scope>
    <source>
        <strain>SCRI 1043 / ATCC BAA-672</strain>
    </source>
</reference>
<organism>
    <name type="scientific">Pectobacterium atrosepticum (strain SCRI 1043 / ATCC BAA-672)</name>
    <name type="common">Erwinia carotovora subsp. atroseptica</name>
    <dbReference type="NCBI Taxonomy" id="218491"/>
    <lineage>
        <taxon>Bacteria</taxon>
        <taxon>Pseudomonadati</taxon>
        <taxon>Pseudomonadota</taxon>
        <taxon>Gammaproteobacteria</taxon>
        <taxon>Enterobacterales</taxon>
        <taxon>Pectobacteriaceae</taxon>
        <taxon>Pectobacterium</taxon>
    </lineage>
</organism>
<feature type="chain" id="PRO_0000225536" description="DNA-directed RNA polymerase subunit beta'">
    <location>
        <begin position="1"/>
        <end position="1407"/>
    </location>
</feature>
<feature type="binding site" evidence="1">
    <location>
        <position position="70"/>
    </location>
    <ligand>
        <name>Zn(2+)</name>
        <dbReference type="ChEBI" id="CHEBI:29105"/>
        <label>1</label>
    </ligand>
</feature>
<feature type="binding site" evidence="1">
    <location>
        <position position="72"/>
    </location>
    <ligand>
        <name>Zn(2+)</name>
        <dbReference type="ChEBI" id="CHEBI:29105"/>
        <label>1</label>
    </ligand>
</feature>
<feature type="binding site" evidence="1">
    <location>
        <position position="85"/>
    </location>
    <ligand>
        <name>Zn(2+)</name>
        <dbReference type="ChEBI" id="CHEBI:29105"/>
        <label>1</label>
    </ligand>
</feature>
<feature type="binding site" evidence="1">
    <location>
        <position position="88"/>
    </location>
    <ligand>
        <name>Zn(2+)</name>
        <dbReference type="ChEBI" id="CHEBI:29105"/>
        <label>1</label>
    </ligand>
</feature>
<feature type="binding site" evidence="1">
    <location>
        <position position="460"/>
    </location>
    <ligand>
        <name>Mg(2+)</name>
        <dbReference type="ChEBI" id="CHEBI:18420"/>
    </ligand>
</feature>
<feature type="binding site" evidence="1">
    <location>
        <position position="462"/>
    </location>
    <ligand>
        <name>Mg(2+)</name>
        <dbReference type="ChEBI" id="CHEBI:18420"/>
    </ligand>
</feature>
<feature type="binding site" evidence="1">
    <location>
        <position position="464"/>
    </location>
    <ligand>
        <name>Mg(2+)</name>
        <dbReference type="ChEBI" id="CHEBI:18420"/>
    </ligand>
</feature>
<feature type="binding site" evidence="1">
    <location>
        <position position="814"/>
    </location>
    <ligand>
        <name>Zn(2+)</name>
        <dbReference type="ChEBI" id="CHEBI:29105"/>
        <label>2</label>
    </ligand>
</feature>
<feature type="binding site" evidence="1">
    <location>
        <position position="888"/>
    </location>
    <ligand>
        <name>Zn(2+)</name>
        <dbReference type="ChEBI" id="CHEBI:29105"/>
        <label>2</label>
    </ligand>
</feature>
<feature type="binding site" evidence="1">
    <location>
        <position position="895"/>
    </location>
    <ligand>
        <name>Zn(2+)</name>
        <dbReference type="ChEBI" id="CHEBI:29105"/>
        <label>2</label>
    </ligand>
</feature>
<feature type="binding site" evidence="1">
    <location>
        <position position="898"/>
    </location>
    <ligand>
        <name>Zn(2+)</name>
        <dbReference type="ChEBI" id="CHEBI:29105"/>
        <label>2</label>
    </ligand>
</feature>
<evidence type="ECO:0000255" key="1">
    <source>
        <dbReference type="HAMAP-Rule" id="MF_01322"/>
    </source>
</evidence>
<accession>Q6DAM9</accession>
<protein>
    <recommendedName>
        <fullName evidence="1">DNA-directed RNA polymerase subunit beta'</fullName>
        <shortName evidence="1">RNAP subunit beta'</shortName>
        <ecNumber evidence="1">2.7.7.6</ecNumber>
    </recommendedName>
    <alternativeName>
        <fullName evidence="1">RNA polymerase subunit beta'</fullName>
    </alternativeName>
    <alternativeName>
        <fullName evidence="1">Transcriptase subunit beta'</fullName>
    </alternativeName>
</protein>
<gene>
    <name evidence="1" type="primary">rpoC</name>
    <name type="ordered locus">ECA0224</name>
</gene>
<dbReference type="EC" id="2.7.7.6" evidence="1"/>
<dbReference type="EMBL" id="BX950851">
    <property type="protein sequence ID" value="CAG73143.1"/>
    <property type="molecule type" value="Genomic_DNA"/>
</dbReference>
<dbReference type="RefSeq" id="WP_011091861.1">
    <property type="nucleotide sequence ID" value="NC_004547.2"/>
</dbReference>
<dbReference type="SMR" id="Q6DAM9"/>
<dbReference type="STRING" id="218491.ECA0224"/>
<dbReference type="GeneID" id="57207090"/>
<dbReference type="KEGG" id="eca:ECA0224"/>
<dbReference type="PATRIC" id="fig|218491.5.peg.224"/>
<dbReference type="eggNOG" id="COG0086">
    <property type="taxonomic scope" value="Bacteria"/>
</dbReference>
<dbReference type="HOGENOM" id="CLU_000524_3_1_6"/>
<dbReference type="OrthoDB" id="9815296at2"/>
<dbReference type="Proteomes" id="UP000007966">
    <property type="component" value="Chromosome"/>
</dbReference>
<dbReference type="GO" id="GO:0000428">
    <property type="term" value="C:DNA-directed RNA polymerase complex"/>
    <property type="evidence" value="ECO:0007669"/>
    <property type="project" value="UniProtKB-KW"/>
</dbReference>
<dbReference type="GO" id="GO:0003677">
    <property type="term" value="F:DNA binding"/>
    <property type="evidence" value="ECO:0007669"/>
    <property type="project" value="UniProtKB-UniRule"/>
</dbReference>
<dbReference type="GO" id="GO:0003899">
    <property type="term" value="F:DNA-directed RNA polymerase activity"/>
    <property type="evidence" value="ECO:0007669"/>
    <property type="project" value="UniProtKB-UniRule"/>
</dbReference>
<dbReference type="GO" id="GO:0000287">
    <property type="term" value="F:magnesium ion binding"/>
    <property type="evidence" value="ECO:0007669"/>
    <property type="project" value="UniProtKB-UniRule"/>
</dbReference>
<dbReference type="GO" id="GO:0008270">
    <property type="term" value="F:zinc ion binding"/>
    <property type="evidence" value="ECO:0007669"/>
    <property type="project" value="UniProtKB-UniRule"/>
</dbReference>
<dbReference type="GO" id="GO:0006351">
    <property type="term" value="P:DNA-templated transcription"/>
    <property type="evidence" value="ECO:0007669"/>
    <property type="project" value="UniProtKB-UniRule"/>
</dbReference>
<dbReference type="CDD" id="cd02655">
    <property type="entry name" value="RNAP_beta'_C"/>
    <property type="match status" value="1"/>
</dbReference>
<dbReference type="CDD" id="cd01609">
    <property type="entry name" value="RNAP_beta'_N"/>
    <property type="match status" value="1"/>
</dbReference>
<dbReference type="FunFam" id="1.10.132.30:FF:000003">
    <property type="entry name" value="DNA-directed RNA polymerase subunit beta"/>
    <property type="match status" value="1"/>
</dbReference>
<dbReference type="FunFam" id="1.10.150.390:FF:000002">
    <property type="entry name" value="DNA-directed RNA polymerase subunit beta"/>
    <property type="match status" value="1"/>
</dbReference>
<dbReference type="FunFam" id="1.10.274.100:FF:000002">
    <property type="entry name" value="DNA-directed RNA polymerase subunit beta"/>
    <property type="match status" value="1"/>
</dbReference>
<dbReference type="FunFam" id="1.10.40.90:FF:000001">
    <property type="entry name" value="DNA-directed RNA polymerase subunit beta"/>
    <property type="match status" value="1"/>
</dbReference>
<dbReference type="FunFam" id="2.40.50.100:FF:000012">
    <property type="entry name" value="DNA-directed RNA polymerase subunit beta"/>
    <property type="match status" value="1"/>
</dbReference>
<dbReference type="FunFam" id="2.40.50.100:FF:000016">
    <property type="entry name" value="DNA-directed RNA polymerase subunit beta"/>
    <property type="match status" value="1"/>
</dbReference>
<dbReference type="FunFam" id="2.40.50.100:FF:000019">
    <property type="entry name" value="DNA-directed RNA polymerase subunit beta"/>
    <property type="match status" value="1"/>
</dbReference>
<dbReference type="FunFam" id="4.10.860.120:FF:000001">
    <property type="entry name" value="DNA-directed RNA polymerase subunit beta"/>
    <property type="match status" value="1"/>
</dbReference>
<dbReference type="Gene3D" id="1.10.132.30">
    <property type="match status" value="1"/>
</dbReference>
<dbReference type="Gene3D" id="1.10.150.390">
    <property type="match status" value="1"/>
</dbReference>
<dbReference type="Gene3D" id="1.10.1790.20">
    <property type="match status" value="1"/>
</dbReference>
<dbReference type="Gene3D" id="1.10.40.90">
    <property type="match status" value="1"/>
</dbReference>
<dbReference type="Gene3D" id="2.40.40.20">
    <property type="match status" value="1"/>
</dbReference>
<dbReference type="Gene3D" id="2.40.50.100">
    <property type="match status" value="3"/>
</dbReference>
<dbReference type="Gene3D" id="4.10.860.120">
    <property type="entry name" value="RNA polymerase II, clamp domain"/>
    <property type="match status" value="1"/>
</dbReference>
<dbReference type="Gene3D" id="1.10.274.100">
    <property type="entry name" value="RNA polymerase Rpb1, domain 3"/>
    <property type="match status" value="1"/>
</dbReference>
<dbReference type="HAMAP" id="MF_01322">
    <property type="entry name" value="RNApol_bact_RpoC"/>
    <property type="match status" value="1"/>
</dbReference>
<dbReference type="InterPro" id="IPR045867">
    <property type="entry name" value="DNA-dir_RpoC_beta_prime"/>
</dbReference>
<dbReference type="InterPro" id="IPR012754">
    <property type="entry name" value="DNA-dir_RpoC_beta_prime_bact"/>
</dbReference>
<dbReference type="InterPro" id="IPR000722">
    <property type="entry name" value="RNA_pol_asu"/>
</dbReference>
<dbReference type="InterPro" id="IPR006592">
    <property type="entry name" value="RNA_pol_N"/>
</dbReference>
<dbReference type="InterPro" id="IPR007080">
    <property type="entry name" value="RNA_pol_Rpb1_1"/>
</dbReference>
<dbReference type="InterPro" id="IPR007066">
    <property type="entry name" value="RNA_pol_Rpb1_3"/>
</dbReference>
<dbReference type="InterPro" id="IPR042102">
    <property type="entry name" value="RNA_pol_Rpb1_3_sf"/>
</dbReference>
<dbReference type="InterPro" id="IPR007083">
    <property type="entry name" value="RNA_pol_Rpb1_4"/>
</dbReference>
<dbReference type="InterPro" id="IPR007081">
    <property type="entry name" value="RNA_pol_Rpb1_5"/>
</dbReference>
<dbReference type="InterPro" id="IPR044893">
    <property type="entry name" value="RNA_pol_Rpb1_clamp_domain"/>
</dbReference>
<dbReference type="InterPro" id="IPR038120">
    <property type="entry name" value="Rpb1_funnel_sf"/>
</dbReference>
<dbReference type="NCBIfam" id="TIGR02386">
    <property type="entry name" value="rpoC_TIGR"/>
    <property type="match status" value="1"/>
</dbReference>
<dbReference type="PANTHER" id="PTHR19376">
    <property type="entry name" value="DNA-DIRECTED RNA POLYMERASE"/>
    <property type="match status" value="1"/>
</dbReference>
<dbReference type="PANTHER" id="PTHR19376:SF54">
    <property type="entry name" value="DNA-DIRECTED RNA POLYMERASE SUBUNIT BETA"/>
    <property type="match status" value="1"/>
</dbReference>
<dbReference type="Pfam" id="PF04997">
    <property type="entry name" value="RNA_pol_Rpb1_1"/>
    <property type="match status" value="1"/>
</dbReference>
<dbReference type="Pfam" id="PF00623">
    <property type="entry name" value="RNA_pol_Rpb1_2"/>
    <property type="match status" value="2"/>
</dbReference>
<dbReference type="Pfam" id="PF04983">
    <property type="entry name" value="RNA_pol_Rpb1_3"/>
    <property type="match status" value="1"/>
</dbReference>
<dbReference type="Pfam" id="PF05000">
    <property type="entry name" value="RNA_pol_Rpb1_4"/>
    <property type="match status" value="1"/>
</dbReference>
<dbReference type="Pfam" id="PF04998">
    <property type="entry name" value="RNA_pol_Rpb1_5"/>
    <property type="match status" value="1"/>
</dbReference>
<dbReference type="SMART" id="SM00663">
    <property type="entry name" value="RPOLA_N"/>
    <property type="match status" value="1"/>
</dbReference>
<dbReference type="SUPFAM" id="SSF64484">
    <property type="entry name" value="beta and beta-prime subunits of DNA dependent RNA-polymerase"/>
    <property type="match status" value="1"/>
</dbReference>
<comment type="function">
    <text evidence="1">DNA-dependent RNA polymerase catalyzes the transcription of DNA into RNA using the four ribonucleoside triphosphates as substrates.</text>
</comment>
<comment type="catalytic activity">
    <reaction evidence="1">
        <text>RNA(n) + a ribonucleoside 5'-triphosphate = RNA(n+1) + diphosphate</text>
        <dbReference type="Rhea" id="RHEA:21248"/>
        <dbReference type="Rhea" id="RHEA-COMP:14527"/>
        <dbReference type="Rhea" id="RHEA-COMP:17342"/>
        <dbReference type="ChEBI" id="CHEBI:33019"/>
        <dbReference type="ChEBI" id="CHEBI:61557"/>
        <dbReference type="ChEBI" id="CHEBI:140395"/>
        <dbReference type="EC" id="2.7.7.6"/>
    </reaction>
</comment>
<comment type="cofactor">
    <cofactor evidence="1">
        <name>Mg(2+)</name>
        <dbReference type="ChEBI" id="CHEBI:18420"/>
    </cofactor>
    <text evidence="1">Binds 1 Mg(2+) ion per subunit.</text>
</comment>
<comment type="cofactor">
    <cofactor evidence="1">
        <name>Zn(2+)</name>
        <dbReference type="ChEBI" id="CHEBI:29105"/>
    </cofactor>
    <text evidence="1">Binds 2 Zn(2+) ions per subunit.</text>
</comment>
<comment type="subunit">
    <text evidence="1">The RNAP catalytic core consists of 2 alpha, 1 beta, 1 beta' and 1 omega subunit. When a sigma factor is associated with the core the holoenzyme is formed, which can initiate transcription.</text>
</comment>
<comment type="similarity">
    <text evidence="1">Belongs to the RNA polymerase beta' chain family.</text>
</comment>
<proteinExistence type="inferred from homology"/>
<name>RPOC_PECAS</name>